<evidence type="ECO:0000250" key="1">
    <source>
        <dbReference type="UniProtKB" id="P40562"/>
    </source>
</evidence>
<evidence type="ECO:0000250" key="2">
    <source>
        <dbReference type="UniProtKB" id="Q9UT23"/>
    </source>
</evidence>
<evidence type="ECO:0000255" key="3">
    <source>
        <dbReference type="PROSITE-ProRule" id="PRU00541"/>
    </source>
</evidence>
<evidence type="ECO:0000255" key="4">
    <source>
        <dbReference type="PROSITE-ProRule" id="PRU00542"/>
    </source>
</evidence>
<evidence type="ECO:0000256" key="5">
    <source>
        <dbReference type="SAM" id="MobiDB-lite"/>
    </source>
</evidence>
<evidence type="ECO:0000305" key="6"/>
<protein>
    <recommendedName>
        <fullName evidence="1">ATP-dependent DNA helicase mph1</fullName>
        <ecNumber evidence="1 2">3.6.4.12</ecNumber>
    </recommendedName>
    <alternativeName>
        <fullName evidence="2">FANCM-like protein 1</fullName>
    </alternativeName>
</protein>
<name>MPH1_ASPOR</name>
<organism>
    <name type="scientific">Aspergillus oryzae (strain ATCC 42149 / RIB 40)</name>
    <name type="common">Yellow koji mold</name>
    <dbReference type="NCBI Taxonomy" id="510516"/>
    <lineage>
        <taxon>Eukaryota</taxon>
        <taxon>Fungi</taxon>
        <taxon>Dikarya</taxon>
        <taxon>Ascomycota</taxon>
        <taxon>Pezizomycotina</taxon>
        <taxon>Eurotiomycetes</taxon>
        <taxon>Eurotiomycetidae</taxon>
        <taxon>Eurotiales</taxon>
        <taxon>Aspergillaceae</taxon>
        <taxon>Aspergillus</taxon>
        <taxon>Aspergillus subgen. Circumdati</taxon>
    </lineage>
</organism>
<gene>
    <name evidence="1" type="primary">mph1</name>
    <name type="ORF">AO090005000804</name>
</gene>
<dbReference type="EC" id="3.6.4.12" evidence="1 2"/>
<dbReference type="EMBL" id="BA000049">
    <property type="protein sequence ID" value="BAE55820.1"/>
    <property type="status" value="ALT_INIT"/>
    <property type="molecule type" value="Genomic_DNA"/>
</dbReference>
<dbReference type="RefSeq" id="XP_001817822.2">
    <property type="nucleotide sequence ID" value="XM_001817770.2"/>
</dbReference>
<dbReference type="SMR" id="Q2URJ5"/>
<dbReference type="STRING" id="510516.Q2URJ5"/>
<dbReference type="EnsemblFungi" id="BAE55820">
    <property type="protein sequence ID" value="BAE55820"/>
    <property type="gene ID" value="AO090005000804"/>
</dbReference>
<dbReference type="GeneID" id="5989767"/>
<dbReference type="KEGG" id="aor:AO090005000804"/>
<dbReference type="Proteomes" id="UP000006564">
    <property type="component" value="Chromosome 1"/>
</dbReference>
<dbReference type="GO" id="GO:0005634">
    <property type="term" value="C:nucleus"/>
    <property type="evidence" value="ECO:0007669"/>
    <property type="project" value="UniProtKB-SubCell"/>
</dbReference>
<dbReference type="GO" id="GO:0043138">
    <property type="term" value="F:3'-5' DNA helicase activity"/>
    <property type="evidence" value="ECO:0007669"/>
    <property type="project" value="EnsemblFungi"/>
</dbReference>
<dbReference type="GO" id="GO:0005524">
    <property type="term" value="F:ATP binding"/>
    <property type="evidence" value="ECO:0007669"/>
    <property type="project" value="UniProtKB-KW"/>
</dbReference>
<dbReference type="GO" id="GO:0016887">
    <property type="term" value="F:ATP hydrolysis activity"/>
    <property type="evidence" value="ECO:0007669"/>
    <property type="project" value="RHEA"/>
</dbReference>
<dbReference type="GO" id="GO:0033677">
    <property type="term" value="F:DNA/RNA helicase activity"/>
    <property type="evidence" value="ECO:0007669"/>
    <property type="project" value="EnsemblFungi"/>
</dbReference>
<dbReference type="GO" id="GO:0070336">
    <property type="term" value="F:flap-structured DNA binding"/>
    <property type="evidence" value="ECO:0007669"/>
    <property type="project" value="EnsemblFungi"/>
</dbReference>
<dbReference type="GO" id="GO:0000400">
    <property type="term" value="F:four-way junction DNA binding"/>
    <property type="evidence" value="ECO:0007669"/>
    <property type="project" value="TreeGrafter"/>
</dbReference>
<dbReference type="GO" id="GO:0009378">
    <property type="term" value="F:four-way junction helicase activity"/>
    <property type="evidence" value="ECO:0007669"/>
    <property type="project" value="TreeGrafter"/>
</dbReference>
<dbReference type="GO" id="GO:0033567">
    <property type="term" value="P:DNA replication, Okazaki fragment processing"/>
    <property type="evidence" value="ECO:0007669"/>
    <property type="project" value="EnsemblFungi"/>
</dbReference>
<dbReference type="GO" id="GO:0007535">
    <property type="term" value="P:donor selection"/>
    <property type="evidence" value="ECO:0007669"/>
    <property type="project" value="EnsemblFungi"/>
</dbReference>
<dbReference type="GO" id="GO:0045003">
    <property type="term" value="P:double-strand break repair via synthesis-dependent strand annealing"/>
    <property type="evidence" value="ECO:0007669"/>
    <property type="project" value="TreeGrafter"/>
</dbReference>
<dbReference type="GO" id="GO:0036297">
    <property type="term" value="P:interstrand cross-link repair"/>
    <property type="evidence" value="ECO:0007669"/>
    <property type="project" value="EnsemblFungi"/>
</dbReference>
<dbReference type="GO" id="GO:0060543">
    <property type="term" value="P:negative regulation of strand invasion"/>
    <property type="evidence" value="ECO:0007669"/>
    <property type="project" value="EnsemblFungi"/>
</dbReference>
<dbReference type="CDD" id="cd18033">
    <property type="entry name" value="DEXDc_FANCM"/>
    <property type="match status" value="1"/>
</dbReference>
<dbReference type="CDD" id="cd12091">
    <property type="entry name" value="FANCM_ID"/>
    <property type="match status" value="1"/>
</dbReference>
<dbReference type="CDD" id="cd18801">
    <property type="entry name" value="SF2_C_FANCM_Hef"/>
    <property type="match status" value="1"/>
</dbReference>
<dbReference type="FunFam" id="3.40.50.300:FF:000861">
    <property type="entry name" value="Fanconi anemia, complementation group M"/>
    <property type="match status" value="1"/>
</dbReference>
<dbReference type="Gene3D" id="6.10.140.100">
    <property type="match status" value="1"/>
</dbReference>
<dbReference type="Gene3D" id="1.20.1320.20">
    <property type="entry name" value="hef helicase domain"/>
    <property type="match status" value="1"/>
</dbReference>
<dbReference type="Gene3D" id="3.40.50.300">
    <property type="entry name" value="P-loop containing nucleotide triphosphate hydrolases"/>
    <property type="match status" value="2"/>
</dbReference>
<dbReference type="InterPro" id="IPR039686">
    <property type="entry name" value="FANCM/Mph1-like_ID"/>
</dbReference>
<dbReference type="InterPro" id="IPR044749">
    <property type="entry name" value="FANCM_DEXDc"/>
</dbReference>
<dbReference type="InterPro" id="IPR006935">
    <property type="entry name" value="Helicase/UvrB_N"/>
</dbReference>
<dbReference type="InterPro" id="IPR014001">
    <property type="entry name" value="Helicase_ATP-bd"/>
</dbReference>
<dbReference type="InterPro" id="IPR001650">
    <property type="entry name" value="Helicase_C-like"/>
</dbReference>
<dbReference type="InterPro" id="IPR027417">
    <property type="entry name" value="P-loop_NTPase"/>
</dbReference>
<dbReference type="PANTHER" id="PTHR14025">
    <property type="entry name" value="FANCONI ANEMIA GROUP M FANCM FAMILY MEMBER"/>
    <property type="match status" value="1"/>
</dbReference>
<dbReference type="PANTHER" id="PTHR14025:SF20">
    <property type="entry name" value="FANCONI ANEMIA GROUP M PROTEIN"/>
    <property type="match status" value="1"/>
</dbReference>
<dbReference type="Pfam" id="PF00271">
    <property type="entry name" value="Helicase_C"/>
    <property type="match status" value="1"/>
</dbReference>
<dbReference type="Pfam" id="PF04851">
    <property type="entry name" value="ResIII"/>
    <property type="match status" value="1"/>
</dbReference>
<dbReference type="SMART" id="SM00487">
    <property type="entry name" value="DEXDc"/>
    <property type="match status" value="1"/>
</dbReference>
<dbReference type="SMART" id="SM00490">
    <property type="entry name" value="HELICc"/>
    <property type="match status" value="1"/>
</dbReference>
<dbReference type="SUPFAM" id="SSF52540">
    <property type="entry name" value="P-loop containing nucleoside triphosphate hydrolases"/>
    <property type="match status" value="1"/>
</dbReference>
<dbReference type="PROSITE" id="PS51192">
    <property type="entry name" value="HELICASE_ATP_BIND_1"/>
    <property type="match status" value="1"/>
</dbReference>
<dbReference type="PROSITE" id="PS51194">
    <property type="entry name" value="HELICASE_CTER"/>
    <property type="match status" value="1"/>
</dbReference>
<reference key="1">
    <citation type="journal article" date="2005" name="Nature">
        <title>Genome sequencing and analysis of Aspergillus oryzae.</title>
        <authorList>
            <person name="Machida M."/>
            <person name="Asai K."/>
            <person name="Sano M."/>
            <person name="Tanaka T."/>
            <person name="Kumagai T."/>
            <person name="Terai G."/>
            <person name="Kusumoto K."/>
            <person name="Arima T."/>
            <person name="Akita O."/>
            <person name="Kashiwagi Y."/>
            <person name="Abe K."/>
            <person name="Gomi K."/>
            <person name="Horiuchi H."/>
            <person name="Kitamoto K."/>
            <person name="Kobayashi T."/>
            <person name="Takeuchi M."/>
            <person name="Denning D.W."/>
            <person name="Galagan J.E."/>
            <person name="Nierman W.C."/>
            <person name="Yu J."/>
            <person name="Archer D.B."/>
            <person name="Bennett J.W."/>
            <person name="Bhatnagar D."/>
            <person name="Cleveland T.E."/>
            <person name="Fedorova N.D."/>
            <person name="Gotoh O."/>
            <person name="Horikawa H."/>
            <person name="Hosoyama A."/>
            <person name="Ichinomiya M."/>
            <person name="Igarashi R."/>
            <person name="Iwashita K."/>
            <person name="Juvvadi P.R."/>
            <person name="Kato M."/>
            <person name="Kato Y."/>
            <person name="Kin T."/>
            <person name="Kokubun A."/>
            <person name="Maeda H."/>
            <person name="Maeyama N."/>
            <person name="Maruyama J."/>
            <person name="Nagasaki H."/>
            <person name="Nakajima T."/>
            <person name="Oda K."/>
            <person name="Okada K."/>
            <person name="Paulsen I."/>
            <person name="Sakamoto K."/>
            <person name="Sawano T."/>
            <person name="Takahashi M."/>
            <person name="Takase K."/>
            <person name="Terabayashi Y."/>
            <person name="Wortman J.R."/>
            <person name="Yamada O."/>
            <person name="Yamagata Y."/>
            <person name="Anazawa H."/>
            <person name="Hata Y."/>
            <person name="Koide Y."/>
            <person name="Komori T."/>
            <person name="Koyama Y."/>
            <person name="Minetoki T."/>
            <person name="Suharnan S."/>
            <person name="Tanaka A."/>
            <person name="Isono K."/>
            <person name="Kuhara S."/>
            <person name="Ogasawara N."/>
            <person name="Kikuchi H."/>
        </authorList>
    </citation>
    <scope>NUCLEOTIDE SEQUENCE [LARGE SCALE GENOMIC DNA]</scope>
    <source>
        <strain>ATCC 42149 / RIB 40</strain>
    </source>
</reference>
<comment type="function">
    <text evidence="2">ATP-dependent DNA helicase involved in DNA damage repair by homologous recombination and in genome maintenance. Capable of unwinding D-loops. Plays a role in limiting crossover recombinants during mitotic DNA double-strand break (DSB) repair. Component of a FANCM-MHF complex which promotes gene conversion at blocked replication forks, probably by reversal of the stalled fork.</text>
</comment>
<comment type="catalytic activity">
    <reaction evidence="2">
        <text>ATP + H2O = ADP + phosphate + H(+)</text>
        <dbReference type="Rhea" id="RHEA:13065"/>
        <dbReference type="ChEBI" id="CHEBI:15377"/>
        <dbReference type="ChEBI" id="CHEBI:15378"/>
        <dbReference type="ChEBI" id="CHEBI:30616"/>
        <dbReference type="ChEBI" id="CHEBI:43474"/>
        <dbReference type="ChEBI" id="CHEBI:456216"/>
        <dbReference type="EC" id="3.6.4.12"/>
    </reaction>
</comment>
<comment type="subunit">
    <text evidence="2">Interacts with the MHF histone-fold complex to form the FANCM-MHF complex.</text>
</comment>
<comment type="subcellular location">
    <subcellularLocation>
        <location evidence="1">Nucleus</location>
    </subcellularLocation>
</comment>
<comment type="similarity">
    <text evidence="6">Belongs to the DEAD box helicase family. DEAH subfamily. FANCM sub-subfamily.</text>
</comment>
<comment type="sequence caution" evidence="6">
    <conflict type="erroneous initiation">
        <sequence resource="EMBL-CDS" id="BAE55820"/>
    </conflict>
</comment>
<feature type="chain" id="PRO_0000333367" description="ATP-dependent DNA helicase mph1">
    <location>
        <begin position="1"/>
        <end position="1129"/>
    </location>
</feature>
<feature type="domain" description="Helicase ATP-binding" evidence="3">
    <location>
        <begin position="331"/>
        <end position="499"/>
    </location>
</feature>
<feature type="domain" description="Helicase C-terminal" evidence="4">
    <location>
        <begin position="674"/>
        <end position="843"/>
    </location>
</feature>
<feature type="region of interest" description="Disordered" evidence="5">
    <location>
        <begin position="1"/>
        <end position="101"/>
    </location>
</feature>
<feature type="region of interest" description="Disordered" evidence="5">
    <location>
        <begin position="124"/>
        <end position="222"/>
    </location>
</feature>
<feature type="region of interest" description="Disordered" evidence="5">
    <location>
        <begin position="236"/>
        <end position="306"/>
    </location>
</feature>
<feature type="region of interest" description="Disordered" evidence="5">
    <location>
        <begin position="863"/>
        <end position="930"/>
    </location>
</feature>
<feature type="region of interest" description="Disordered" evidence="5">
    <location>
        <begin position="1018"/>
        <end position="1060"/>
    </location>
</feature>
<feature type="region of interest" description="Disordered" evidence="5">
    <location>
        <begin position="1072"/>
        <end position="1129"/>
    </location>
</feature>
<feature type="short sequence motif" description="DEAH box" evidence="3">
    <location>
        <begin position="447"/>
        <end position="450"/>
    </location>
</feature>
<feature type="compositionally biased region" description="Basic and acidic residues" evidence="5">
    <location>
        <begin position="45"/>
        <end position="63"/>
    </location>
</feature>
<feature type="compositionally biased region" description="Polar residues" evidence="5">
    <location>
        <begin position="203"/>
        <end position="222"/>
    </location>
</feature>
<feature type="compositionally biased region" description="Polar residues" evidence="5">
    <location>
        <begin position="242"/>
        <end position="285"/>
    </location>
</feature>
<feature type="compositionally biased region" description="Basic and acidic residues" evidence="5">
    <location>
        <begin position="297"/>
        <end position="306"/>
    </location>
</feature>
<feature type="compositionally biased region" description="Basic residues" evidence="5">
    <location>
        <begin position="877"/>
        <end position="889"/>
    </location>
</feature>
<feature type="compositionally biased region" description="Basic residues" evidence="5">
    <location>
        <begin position="1028"/>
        <end position="1044"/>
    </location>
</feature>
<feature type="compositionally biased region" description="Polar residues" evidence="5">
    <location>
        <begin position="1077"/>
        <end position="1086"/>
    </location>
</feature>
<feature type="binding site" evidence="3">
    <location>
        <begin position="344"/>
        <end position="351"/>
    </location>
    <ligand>
        <name>ATP</name>
        <dbReference type="ChEBI" id="CHEBI:30616"/>
    </ligand>
</feature>
<accession>Q2URJ5</accession>
<keyword id="KW-0067">ATP-binding</keyword>
<keyword id="KW-0227">DNA damage</keyword>
<keyword id="KW-0234">DNA repair</keyword>
<keyword id="KW-0238">DNA-binding</keyword>
<keyword id="KW-0347">Helicase</keyword>
<keyword id="KW-0378">Hydrolase</keyword>
<keyword id="KW-0547">Nucleotide-binding</keyword>
<keyword id="KW-0539">Nucleus</keyword>
<keyword id="KW-1185">Reference proteome</keyword>
<sequence length="1129" mass="126479">MTGSDDSSVDYFREGFDDITDDEFPDATRNAVGSSPRPAKRRRRDGTASDVRRRPSENRESQRYSDGGSPQTGSDSFVVDDDEGNYDELQSPSQDSYFEDAEAPSKYKVFIPKRSNIQENIFVTQLTQPPSPPEMIRGPRWKKPEPSIARASTIPTQTIGEGRAAPNAPAASVDDYDDEDLNAAIAASLESFENEQSRPPPSNTKAPTHQPITRSPTVQNEGATDTSFLLEDIPDDAFDSDISLSPPTRAQQQPATRQFGQSSNRPLGVRQTSLFDMTSRNQTDQPPIGEQVWSPPQKDEPPTQHKLDHDALSTWVYPTNLGKTRDYQFNIAQKGLFHNLLVALPTGLGKTFIAATIMLNWFRWTESAQIIFVAPTKPLVAQQISACFGIAGIPRSQTTMLTGEAAPGIRAEEWQNKRVFFMTPQTLINDLKSGIADPKRIVLLVVDEAHRATGGYAYVEVVKFLRRYNQSFRVLALTATPGSTVESVQAVIDGLDIARVEIRTEQSLDIREYVHSRNTEVQTFKNSEEMVLCMDLLSKTLQPLVDQLRTLNAYWGRDPMMLTAFGLTKSRQQWMASDAGRNAHFGLKGKVNAIFTVLASLAHAIDLLKYHGITPFYRHLLHFQSNTEGQKGGKYQRQVVQDESFKKLINHLQPWTKNPEFIGHPKLEYLKSVVLNHFMDAGEGSNGEASDSQSSTRIMIFVHFRDSAEEVTRVLKRYEPMIRPHVFVGQSSAKGSEGMGQKTQLDIVQKFKKGTYNTIVATSIGEEGLDIGEVDLIVCYDSSASPIRMLQRMGRTGRKRAGNIVLLLMEGKEEESYIKAKDNYEKMQQMIASGSRFTFHDDISPRILPAGIRPVADKRHIDIPDENAEQSLPEPKRRGRAPKRPPKKFHMPDNVETGFTKASSLTAGPKSKAEKSRKPRTPTPEPVEIPALEEVVLTSAQQRELEQHYRNIGAASPQFIRNPRNDAFPRLQLVARPTKVVKHGSLTRRMIGTLQKMNNVGPDCGDRFKKILALESARQGDSVIPNRSPRHERRRRLSKTKPRYNHLSTSVDKETLSTEDSQLVTPEHLLSSVVKGQKQQPFYSSQRSKDDDSDDNFDPPDLATLLTRSAERNNAHKTSRFVVSDDSDD</sequence>
<proteinExistence type="inferred from homology"/>